<feature type="chain" id="PRO_0000272566" description="Phosphate import ATP-binding protein PstB">
    <location>
        <begin position="1"/>
        <end position="271"/>
    </location>
</feature>
<feature type="domain" description="ABC transporter" evidence="1">
    <location>
        <begin position="13"/>
        <end position="266"/>
    </location>
</feature>
<feature type="binding site" evidence="1">
    <location>
        <begin position="57"/>
        <end position="64"/>
    </location>
    <ligand>
        <name>ATP</name>
        <dbReference type="ChEBI" id="CHEBI:30616"/>
    </ligand>
</feature>
<name>PSTB_THET8</name>
<dbReference type="EC" id="7.3.2.1" evidence="1"/>
<dbReference type="EMBL" id="AP008226">
    <property type="protein sequence ID" value="BAD70085.1"/>
    <property type="molecule type" value="Genomic_DNA"/>
</dbReference>
<dbReference type="RefSeq" id="WP_011227814.1">
    <property type="nucleotide sequence ID" value="NC_006461.1"/>
</dbReference>
<dbReference type="RefSeq" id="YP_143528.1">
    <property type="nucleotide sequence ID" value="NC_006461.1"/>
</dbReference>
<dbReference type="SMR" id="Q5SLN1"/>
<dbReference type="EnsemblBacteria" id="BAD70085">
    <property type="protein sequence ID" value="BAD70085"/>
    <property type="gene ID" value="BAD70085"/>
</dbReference>
<dbReference type="GeneID" id="3169756"/>
<dbReference type="KEGG" id="ttj:TTHA0262"/>
<dbReference type="PATRIC" id="fig|300852.9.peg.262"/>
<dbReference type="eggNOG" id="COG1117">
    <property type="taxonomic scope" value="Bacteria"/>
</dbReference>
<dbReference type="HOGENOM" id="CLU_000604_1_22_0"/>
<dbReference type="PhylomeDB" id="Q5SLN1"/>
<dbReference type="Proteomes" id="UP000000532">
    <property type="component" value="Chromosome"/>
</dbReference>
<dbReference type="GO" id="GO:0005886">
    <property type="term" value="C:plasma membrane"/>
    <property type="evidence" value="ECO:0007669"/>
    <property type="project" value="UniProtKB-SubCell"/>
</dbReference>
<dbReference type="GO" id="GO:0005524">
    <property type="term" value="F:ATP binding"/>
    <property type="evidence" value="ECO:0007669"/>
    <property type="project" value="UniProtKB-KW"/>
</dbReference>
<dbReference type="GO" id="GO:0016887">
    <property type="term" value="F:ATP hydrolysis activity"/>
    <property type="evidence" value="ECO:0007669"/>
    <property type="project" value="InterPro"/>
</dbReference>
<dbReference type="GO" id="GO:0015415">
    <property type="term" value="F:ATPase-coupled phosphate ion transmembrane transporter activity"/>
    <property type="evidence" value="ECO:0007669"/>
    <property type="project" value="UniProtKB-EC"/>
</dbReference>
<dbReference type="GO" id="GO:0035435">
    <property type="term" value="P:phosphate ion transmembrane transport"/>
    <property type="evidence" value="ECO:0007669"/>
    <property type="project" value="InterPro"/>
</dbReference>
<dbReference type="CDD" id="cd03260">
    <property type="entry name" value="ABC_PstB_phosphate_transporter"/>
    <property type="match status" value="1"/>
</dbReference>
<dbReference type="Gene3D" id="3.40.50.300">
    <property type="entry name" value="P-loop containing nucleotide triphosphate hydrolases"/>
    <property type="match status" value="1"/>
</dbReference>
<dbReference type="InterPro" id="IPR003593">
    <property type="entry name" value="AAA+_ATPase"/>
</dbReference>
<dbReference type="InterPro" id="IPR003439">
    <property type="entry name" value="ABC_transporter-like_ATP-bd"/>
</dbReference>
<dbReference type="InterPro" id="IPR017871">
    <property type="entry name" value="ABC_transporter-like_CS"/>
</dbReference>
<dbReference type="InterPro" id="IPR027417">
    <property type="entry name" value="P-loop_NTPase"/>
</dbReference>
<dbReference type="InterPro" id="IPR005670">
    <property type="entry name" value="PstB-like"/>
</dbReference>
<dbReference type="NCBIfam" id="TIGR00972">
    <property type="entry name" value="3a0107s01c2"/>
    <property type="match status" value="1"/>
</dbReference>
<dbReference type="PANTHER" id="PTHR43423">
    <property type="entry name" value="ABC TRANSPORTER I FAMILY MEMBER 17"/>
    <property type="match status" value="1"/>
</dbReference>
<dbReference type="PANTHER" id="PTHR43423:SF1">
    <property type="entry name" value="ABC TRANSPORTER I FAMILY MEMBER 17"/>
    <property type="match status" value="1"/>
</dbReference>
<dbReference type="Pfam" id="PF00005">
    <property type="entry name" value="ABC_tran"/>
    <property type="match status" value="1"/>
</dbReference>
<dbReference type="SMART" id="SM00382">
    <property type="entry name" value="AAA"/>
    <property type="match status" value="1"/>
</dbReference>
<dbReference type="SUPFAM" id="SSF52540">
    <property type="entry name" value="P-loop containing nucleoside triphosphate hydrolases"/>
    <property type="match status" value="1"/>
</dbReference>
<dbReference type="PROSITE" id="PS00211">
    <property type="entry name" value="ABC_TRANSPORTER_1"/>
    <property type="match status" value="1"/>
</dbReference>
<dbReference type="PROSITE" id="PS50893">
    <property type="entry name" value="ABC_TRANSPORTER_2"/>
    <property type="match status" value="1"/>
</dbReference>
<dbReference type="PROSITE" id="PS51238">
    <property type="entry name" value="PSTB"/>
    <property type="match status" value="1"/>
</dbReference>
<keyword id="KW-0067">ATP-binding</keyword>
<keyword id="KW-0997">Cell inner membrane</keyword>
<keyword id="KW-1003">Cell membrane</keyword>
<keyword id="KW-0472">Membrane</keyword>
<keyword id="KW-0547">Nucleotide-binding</keyword>
<keyword id="KW-0592">Phosphate transport</keyword>
<keyword id="KW-1185">Reference proteome</keyword>
<keyword id="KW-1278">Translocase</keyword>
<keyword id="KW-0813">Transport</keyword>
<protein>
    <recommendedName>
        <fullName evidence="1">Phosphate import ATP-binding protein PstB</fullName>
        <ecNumber evidence="1">7.3.2.1</ecNumber>
    </recommendedName>
    <alternativeName>
        <fullName evidence="1">ABC phosphate transporter</fullName>
    </alternativeName>
    <alternativeName>
        <fullName evidence="1">Phosphate-transporting ATPase</fullName>
    </alternativeName>
</protein>
<accession>Q5SLN1</accession>
<proteinExistence type="inferred from homology"/>
<comment type="function">
    <text evidence="1">Part of the ABC transporter complex PstSACB involved in phosphate import. Responsible for energy coupling to the transport system.</text>
</comment>
<comment type="catalytic activity">
    <reaction evidence="1">
        <text>phosphate(out) + ATP + H2O = ADP + 2 phosphate(in) + H(+)</text>
        <dbReference type="Rhea" id="RHEA:24440"/>
        <dbReference type="ChEBI" id="CHEBI:15377"/>
        <dbReference type="ChEBI" id="CHEBI:15378"/>
        <dbReference type="ChEBI" id="CHEBI:30616"/>
        <dbReference type="ChEBI" id="CHEBI:43474"/>
        <dbReference type="ChEBI" id="CHEBI:456216"/>
        <dbReference type="EC" id="7.3.2.1"/>
    </reaction>
</comment>
<comment type="subunit">
    <text evidence="1">The complex is composed of two ATP-binding proteins (PstB), two transmembrane proteins (PstC and PstA) and a solute-binding protein (PstS).</text>
</comment>
<comment type="subcellular location">
    <subcellularLocation>
        <location evidence="1">Cell inner membrane</location>
        <topology evidence="1">Peripheral membrane protein</topology>
    </subcellularLocation>
</comment>
<comment type="similarity">
    <text evidence="1">Belongs to the ABC transporter superfamily. Phosphate importer (TC 3.A.1.7) family.</text>
</comment>
<sequence length="271" mass="30379">MVSLEMLKEHETVRTAPVSEAEALVDVRGLSLWYGKKQALYDISVRFPRNQVTAIIGPSGCGKSTLLRSLNRMNDLVPGVRVEGEVLYEGVNIYDPRVDPVAVRRHIGMVFQKPNPFPKTIFENVAFGLRLMGVKGSELEDRVVEALKRAALWEEVKDRFKKESGLRLSGGQQQRLCIARAIAVEPPLLLMDEPTSALDPIATQAIEDLILELKERYTVVIVTHNMQQAARVSDRTLFMHLGVLVEEGPTEVIFTKPKHPYTEAYITGRFG</sequence>
<organism>
    <name type="scientific">Thermus thermophilus (strain ATCC 27634 / DSM 579 / HB8)</name>
    <dbReference type="NCBI Taxonomy" id="300852"/>
    <lineage>
        <taxon>Bacteria</taxon>
        <taxon>Thermotogati</taxon>
        <taxon>Deinococcota</taxon>
        <taxon>Deinococci</taxon>
        <taxon>Thermales</taxon>
        <taxon>Thermaceae</taxon>
        <taxon>Thermus</taxon>
    </lineage>
</organism>
<gene>
    <name evidence="1" type="primary">pstB</name>
    <name type="ordered locus">TTHA0262</name>
</gene>
<evidence type="ECO:0000255" key="1">
    <source>
        <dbReference type="HAMAP-Rule" id="MF_01702"/>
    </source>
</evidence>
<reference key="1">
    <citation type="submission" date="2004-11" db="EMBL/GenBank/DDBJ databases">
        <title>Complete genome sequence of Thermus thermophilus HB8.</title>
        <authorList>
            <person name="Masui R."/>
            <person name="Kurokawa K."/>
            <person name="Nakagawa N."/>
            <person name="Tokunaga F."/>
            <person name="Koyama Y."/>
            <person name="Shibata T."/>
            <person name="Oshima T."/>
            <person name="Yokoyama S."/>
            <person name="Yasunaga T."/>
            <person name="Kuramitsu S."/>
        </authorList>
    </citation>
    <scope>NUCLEOTIDE SEQUENCE [LARGE SCALE GENOMIC DNA]</scope>
    <source>
        <strain>ATCC 27634 / DSM 579 / HB8</strain>
    </source>
</reference>